<keyword id="KW-0002">3D-structure</keyword>
<keyword id="KW-0963">Cytoplasm</keyword>
<keyword id="KW-0217">Developmental protein</keyword>
<keyword id="KW-0221">Differentiation</keyword>
<keyword id="KW-0479">Metal-binding</keyword>
<keyword id="KW-0896">Oogenesis</keyword>
<keyword id="KW-1185">Reference proteome</keyword>
<keyword id="KW-0694">RNA-binding</keyword>
<keyword id="KW-0810">Translation regulation</keyword>
<keyword id="KW-0862">Zinc</keyword>
<keyword id="KW-0863">Zinc-finger</keyword>
<name>NANO3_DANRE</name>
<sequence>MAFSLLQFILSAHGSMETRNQDFQPWKDYMGLADMIRGMKRQEMQSDADSDEQAAALLESPSGPIRSRDSPEQNTSPGGGKPKSSPAERKFCSFCKHNGETEAVYTSHYLKNRDGDVMCPYLRQYKCPLCGATGAKAHTKRFCPMVDKNYCSVYAKSTW</sequence>
<feature type="chain" id="PRO_0000457345" description="Nanos homolog 3">
    <location>
        <begin position="1"/>
        <end position="159"/>
    </location>
</feature>
<feature type="zinc finger region" description="Nanos-type" evidence="2">
    <location>
        <begin position="91"/>
        <end position="145"/>
    </location>
</feature>
<feature type="region of interest" description="Disordered" evidence="3">
    <location>
        <begin position="42"/>
        <end position="87"/>
    </location>
</feature>
<feature type="region of interest" description="Interaction with mylpfa" evidence="6">
    <location>
        <begin position="92"/>
        <end position="159"/>
    </location>
</feature>
<feature type="short sequence motif" description="C2HC 1" evidence="2">
    <location>
        <begin position="92"/>
        <end position="119"/>
    </location>
</feature>
<feature type="short sequence motif" description="C2HC 2" evidence="2">
    <location>
        <begin position="127"/>
        <end position="143"/>
    </location>
</feature>
<feature type="binding site" evidence="2 7 15">
    <location>
        <position position="92"/>
    </location>
    <ligand>
        <name>Zn(2+)</name>
        <dbReference type="ChEBI" id="CHEBI:29105"/>
        <label>1</label>
    </ligand>
</feature>
<feature type="binding site" evidence="2 7 15">
    <location>
        <position position="95"/>
    </location>
    <ligand>
        <name>Zn(2+)</name>
        <dbReference type="ChEBI" id="CHEBI:29105"/>
        <label>1</label>
    </ligand>
</feature>
<feature type="binding site" evidence="2 7 15">
    <location>
        <position position="108"/>
    </location>
    <ligand>
        <name>Zn(2+)</name>
        <dbReference type="ChEBI" id="CHEBI:29105"/>
        <label>1</label>
    </ligand>
</feature>
<feature type="binding site" evidence="2 7 15">
    <location>
        <position position="119"/>
    </location>
    <ligand>
        <name>Zn(2+)</name>
        <dbReference type="ChEBI" id="CHEBI:29105"/>
        <label>1</label>
    </ligand>
</feature>
<feature type="binding site" evidence="2 7 15">
    <location>
        <position position="127"/>
    </location>
    <ligand>
        <name>Zn(2+)</name>
        <dbReference type="ChEBI" id="CHEBI:29105"/>
        <label>2</label>
    </ligand>
</feature>
<feature type="binding site" evidence="2 7 15">
    <location>
        <position position="130"/>
    </location>
    <ligand>
        <name>Zn(2+)</name>
        <dbReference type="ChEBI" id="CHEBI:29105"/>
        <label>2</label>
    </ligand>
</feature>
<feature type="binding site" evidence="2 7 15">
    <location>
        <position position="138"/>
    </location>
    <ligand>
        <name>Zn(2+)</name>
        <dbReference type="ChEBI" id="CHEBI:29105"/>
        <label>2</label>
    </ligand>
</feature>
<feature type="binding site" evidence="2 7 15">
    <location>
        <position position="143"/>
    </location>
    <ligand>
        <name>Zn(2+)</name>
        <dbReference type="ChEBI" id="CHEBI:29105"/>
        <label>2</label>
    </ligand>
</feature>
<feature type="site" description="Involved in RNA binding" evidence="7">
    <location>
        <position position="96"/>
    </location>
</feature>
<feature type="site" description="Involved in RNA binding" evidence="7">
    <location>
        <position position="111"/>
    </location>
</feature>
<feature type="site" description="Involved in RNA binding" evidence="7">
    <location>
        <position position="123"/>
    </location>
</feature>
<feature type="site" description="Involved in RNA binding" evidence="7">
    <location>
        <position position="141"/>
    </location>
</feature>
<feature type="mutagenesis site" description="Abolishes RNA-binding activity." evidence="7">
    <original>K</original>
    <variation>A</variation>
    <location>
        <position position="96"/>
    </location>
</feature>
<feature type="mutagenesis site" description="Does not affect RNA-binding activity." evidence="7">
    <original>H</original>
    <variation>A</variation>
    <location>
        <position position="97"/>
    </location>
</feature>
<feature type="mutagenesis site" description="Abolishes RNA-binding activity." evidence="7">
    <original>K</original>
    <variation>A</variation>
    <location>
        <position position="111"/>
    </location>
</feature>
<feature type="mutagenesis site" description="Does not affect RNA-binding activity." evidence="7">
    <original>R</original>
    <variation>A</variation>
    <location>
        <position position="113"/>
    </location>
</feature>
<feature type="mutagenesis site" description="Abolishes RNA-binding activity." evidence="7">
    <original>R</original>
    <variation>A</variation>
    <location>
        <position position="123"/>
    </location>
</feature>
<feature type="mutagenesis site" description="Does not affect RNA-binding activity." evidence="7">
    <original>Y</original>
    <variation>A</variation>
    <location>
        <position position="125"/>
    </location>
</feature>
<feature type="mutagenesis site" description="Does not affect RNA-binding activity." evidence="7">
    <original>K</original>
    <variation>A</variation>
    <location>
        <position position="126"/>
    </location>
</feature>
<feature type="mutagenesis site" description="Does not affect RNA-binding activity." evidence="7">
    <original>K</original>
    <variation>A</variation>
    <location>
        <position position="136"/>
    </location>
</feature>
<feature type="mutagenesis site" description="Does not affect RNA-binding activity." evidence="7">
    <original>K</original>
    <variation>A</variation>
    <location>
        <position position="140"/>
    </location>
</feature>
<feature type="mutagenesis site" description="Abolishes RNA-binding activity." evidence="7">
    <original>R</original>
    <variation>A</variation>
    <location>
        <position position="141"/>
    </location>
</feature>
<feature type="mutagenesis site" description="Does not affect RNA-binding activity." evidence="7">
    <original>F</original>
    <variation>A</variation>
    <location>
        <position position="142"/>
    </location>
</feature>
<feature type="mutagenesis site" description="Does not affect interaction with mylpfa." evidence="6">
    <original>K</original>
    <variation>A</variation>
    <variation>R</variation>
    <location>
        <position position="156"/>
    </location>
</feature>
<feature type="mutagenesis site" description="Does not affect interaction with mylpfa." evidence="6">
    <original>S</original>
    <variation>A</variation>
    <location>
        <position position="157"/>
    </location>
</feature>
<feature type="mutagenesis site" description="Does not affect interaction with mylpfa." evidence="6">
    <original>T</original>
    <variation>A</variation>
    <location>
        <position position="158"/>
    </location>
</feature>
<feature type="mutagenesis site" description="Does not affect interaction with mylpfa." evidence="6">
    <original>W</original>
    <variation>F</variation>
    <location>
        <position position="159"/>
    </location>
</feature>
<feature type="sequence conflict" description="In Ref. 3; AAH97090." evidence="11" ref="3">
    <original>Q</original>
    <variation>R</variation>
    <location>
        <position position="42"/>
    </location>
</feature>
<feature type="helix" evidence="16">
    <location>
        <begin position="93"/>
        <end position="97"/>
    </location>
</feature>
<feature type="helix" evidence="16">
    <location>
        <begin position="102"/>
        <end position="105"/>
    </location>
</feature>
<feature type="helix" evidence="16">
    <location>
        <begin position="122"/>
        <end position="124"/>
    </location>
</feature>
<feature type="turn" evidence="16">
    <location>
        <begin position="128"/>
        <end position="130"/>
    </location>
</feature>
<feature type="helix" evidence="16">
    <location>
        <begin position="134"/>
        <end position="136"/>
    </location>
</feature>
<feature type="helix" evidence="16">
    <location>
        <begin position="140"/>
        <end position="142"/>
    </location>
</feature>
<feature type="helix" evidence="16">
    <location>
        <begin position="147"/>
        <end position="150"/>
    </location>
</feature>
<accession>Q90WW1</accession>
<accession>A0A8M1P771</accession>
<accession>Q4QRE8</accession>
<dbReference type="EMBL" id="AY052376">
    <property type="protein sequence ID" value="AAL15474.1"/>
    <property type="molecule type" value="mRNA"/>
</dbReference>
<dbReference type="EMBL" id="BX284640">
    <property type="status" value="NOT_ANNOTATED_CDS"/>
    <property type="molecule type" value="Genomic_DNA"/>
</dbReference>
<dbReference type="EMBL" id="BC097090">
    <property type="protein sequence ID" value="AAH97090.1"/>
    <property type="molecule type" value="mRNA"/>
</dbReference>
<dbReference type="RefSeq" id="NP_571953.1">
    <property type="nucleotide sequence ID" value="NM_131878.1"/>
</dbReference>
<dbReference type="PDB" id="3ALR">
    <property type="method" value="X-ray"/>
    <property type="resolution" value="2.10 A"/>
    <property type="chains" value="A/B/C/D=59-159"/>
</dbReference>
<dbReference type="PDBsum" id="3ALR"/>
<dbReference type="SMR" id="Q90WW1"/>
<dbReference type="ELM" id="Q4QRE8"/>
<dbReference type="FunCoup" id="Q90WW1">
    <property type="interactions" value="988"/>
</dbReference>
<dbReference type="MINT" id="Q90WW1"/>
<dbReference type="STRING" id="7955.ENSDARP00000089386"/>
<dbReference type="PaxDb" id="7955-ENSDARP00000089386"/>
<dbReference type="Ensembl" id="ENSDART00000098615">
    <property type="protein sequence ID" value="ENSDARP00000089386"/>
    <property type="gene ID" value="ENSDARG00000068255"/>
</dbReference>
<dbReference type="GeneID" id="140631"/>
<dbReference type="KEGG" id="dre:140631"/>
<dbReference type="AGR" id="ZFIN:ZDB-GENE-011221-1"/>
<dbReference type="CTD" id="342977"/>
<dbReference type="ZFIN" id="ZDB-GENE-011221-1">
    <property type="gene designation" value="nanos3"/>
</dbReference>
<dbReference type="eggNOG" id="KOG4602">
    <property type="taxonomic scope" value="Eukaryota"/>
</dbReference>
<dbReference type="HOGENOM" id="CLU_094055_1_1_1"/>
<dbReference type="InParanoid" id="Q90WW1"/>
<dbReference type="OMA" id="KHNGESA"/>
<dbReference type="OrthoDB" id="5864971at2759"/>
<dbReference type="TreeFam" id="TF326882"/>
<dbReference type="EvolutionaryTrace" id="Q90WW1"/>
<dbReference type="PRO" id="PR:Q90WW1"/>
<dbReference type="Proteomes" id="UP000000437">
    <property type="component" value="Chromosome 1"/>
</dbReference>
<dbReference type="Bgee" id="ENSDARG00000068255">
    <property type="expression patterns" value="Expressed in primordial germ cell and 22 other cell types or tissues"/>
</dbReference>
<dbReference type="GO" id="GO:0005737">
    <property type="term" value="C:cytoplasm"/>
    <property type="evidence" value="ECO:0000314"/>
    <property type="project" value="ZFIN"/>
</dbReference>
<dbReference type="GO" id="GO:0043186">
    <property type="term" value="C:P granule"/>
    <property type="evidence" value="ECO:0000314"/>
    <property type="project" value="ZFIN"/>
</dbReference>
<dbReference type="GO" id="GO:0048471">
    <property type="term" value="C:perinuclear region of cytoplasm"/>
    <property type="evidence" value="ECO:0000318"/>
    <property type="project" value="GO_Central"/>
</dbReference>
<dbReference type="GO" id="GO:0042802">
    <property type="term" value="F:identical protein binding"/>
    <property type="evidence" value="ECO:0000353"/>
    <property type="project" value="IntAct"/>
</dbReference>
<dbReference type="GO" id="GO:0003729">
    <property type="term" value="F:mRNA binding"/>
    <property type="evidence" value="ECO:0000318"/>
    <property type="project" value="GO_Central"/>
</dbReference>
<dbReference type="GO" id="GO:0003727">
    <property type="term" value="F:single-stranded RNA binding"/>
    <property type="evidence" value="ECO:0000314"/>
    <property type="project" value="ZFIN"/>
</dbReference>
<dbReference type="GO" id="GO:0008270">
    <property type="term" value="F:zinc ion binding"/>
    <property type="evidence" value="ECO:0007669"/>
    <property type="project" value="UniProtKB-KW"/>
</dbReference>
<dbReference type="GO" id="GO:0007292">
    <property type="term" value="P:female gamete generation"/>
    <property type="evidence" value="ECO:0000315"/>
    <property type="project" value="ZFIN"/>
</dbReference>
<dbReference type="GO" id="GO:0036099">
    <property type="term" value="P:female germ-line stem cell population maintenance"/>
    <property type="evidence" value="ECO:0000315"/>
    <property type="project" value="ZFIN"/>
</dbReference>
<dbReference type="GO" id="GO:0007281">
    <property type="term" value="P:germ cell development"/>
    <property type="evidence" value="ECO:0000315"/>
    <property type="project" value="UniProtKB"/>
</dbReference>
<dbReference type="GO" id="GO:0008354">
    <property type="term" value="P:germ cell migration"/>
    <property type="evidence" value="ECO:0000315"/>
    <property type="project" value="UniProtKB"/>
</dbReference>
<dbReference type="GO" id="GO:0001933">
    <property type="term" value="P:negative regulation of protein phosphorylation"/>
    <property type="evidence" value="ECO:0000314"/>
    <property type="project" value="UniProtKB"/>
</dbReference>
<dbReference type="GO" id="GO:0017148">
    <property type="term" value="P:negative regulation of translation"/>
    <property type="evidence" value="ECO:0000318"/>
    <property type="project" value="GO_Central"/>
</dbReference>
<dbReference type="GO" id="GO:0001555">
    <property type="term" value="P:oocyte growth"/>
    <property type="evidence" value="ECO:0000315"/>
    <property type="project" value="ZFIN"/>
</dbReference>
<dbReference type="GO" id="GO:0048477">
    <property type="term" value="P:oogenesis"/>
    <property type="evidence" value="ECO:0000318"/>
    <property type="project" value="GO_Central"/>
</dbReference>
<dbReference type="FunFam" id="4.10.60.30:FF:000001">
    <property type="entry name" value="nanos homolog 3"/>
    <property type="match status" value="1"/>
</dbReference>
<dbReference type="Gene3D" id="4.10.60.30">
    <property type="entry name" value="Nanos, RNA-binding domain"/>
    <property type="match status" value="1"/>
</dbReference>
<dbReference type="InterPro" id="IPR008705">
    <property type="entry name" value="Nanos/Xcar2"/>
</dbReference>
<dbReference type="InterPro" id="IPR038129">
    <property type="entry name" value="Nanos_sf"/>
</dbReference>
<dbReference type="InterPro" id="IPR024161">
    <property type="entry name" value="Znf_nanos-typ"/>
</dbReference>
<dbReference type="PANTHER" id="PTHR12887">
    <property type="entry name" value="NANOS PROTEIN"/>
    <property type="match status" value="1"/>
</dbReference>
<dbReference type="Pfam" id="PF05741">
    <property type="entry name" value="zf-nanos"/>
    <property type="match status" value="1"/>
</dbReference>
<dbReference type="PROSITE" id="PS51522">
    <property type="entry name" value="ZF_NANOS"/>
    <property type="match status" value="1"/>
</dbReference>
<protein>
    <recommendedName>
        <fullName evidence="11">Nanos homolog 3</fullName>
    </recommendedName>
</protein>
<reference evidence="13" key="1">
    <citation type="journal article" date="2001" name="Genes Dev.">
        <title>A zebrafish nanos-related gene is essential for the development of primordial germ cells.</title>
        <authorList>
            <person name="Koeprunner M."/>
            <person name="Thisse C."/>
            <person name="Thisse B."/>
            <person name="Raz E."/>
        </authorList>
    </citation>
    <scope>NUCLEOTIDE SEQUENCE [MRNA]</scope>
    <scope>FUNCTION</scope>
    <scope>SUBCELLULAR LOCATION</scope>
    <scope>TISSUE SPECIFICITY</scope>
    <scope>DEVELOPMENTAL STAGE</scope>
    <scope>DISRUPTION PHENOTYPE</scope>
</reference>
<reference key="2">
    <citation type="journal article" date="2013" name="Nature">
        <title>The zebrafish reference genome sequence and its relationship to the human genome.</title>
        <authorList>
            <person name="Howe K."/>
            <person name="Clark M.D."/>
            <person name="Torroja C.F."/>
            <person name="Torrance J."/>
            <person name="Berthelot C."/>
            <person name="Muffato M."/>
            <person name="Collins J.E."/>
            <person name="Humphray S."/>
            <person name="McLaren K."/>
            <person name="Matthews L."/>
            <person name="McLaren S."/>
            <person name="Sealy I."/>
            <person name="Caccamo M."/>
            <person name="Churcher C."/>
            <person name="Scott C."/>
            <person name="Barrett J.C."/>
            <person name="Koch R."/>
            <person name="Rauch G.J."/>
            <person name="White S."/>
            <person name="Chow W."/>
            <person name="Kilian B."/>
            <person name="Quintais L.T."/>
            <person name="Guerra-Assuncao J.A."/>
            <person name="Zhou Y."/>
            <person name="Gu Y."/>
            <person name="Yen J."/>
            <person name="Vogel J.H."/>
            <person name="Eyre T."/>
            <person name="Redmond S."/>
            <person name="Banerjee R."/>
            <person name="Chi J."/>
            <person name="Fu B."/>
            <person name="Langley E."/>
            <person name="Maguire S.F."/>
            <person name="Laird G.K."/>
            <person name="Lloyd D."/>
            <person name="Kenyon E."/>
            <person name="Donaldson S."/>
            <person name="Sehra H."/>
            <person name="Almeida-King J."/>
            <person name="Loveland J."/>
            <person name="Trevanion S."/>
            <person name="Jones M."/>
            <person name="Quail M."/>
            <person name="Willey D."/>
            <person name="Hunt A."/>
            <person name="Burton J."/>
            <person name="Sims S."/>
            <person name="McLay K."/>
            <person name="Plumb B."/>
            <person name="Davis J."/>
            <person name="Clee C."/>
            <person name="Oliver K."/>
            <person name="Clark R."/>
            <person name="Riddle C."/>
            <person name="Elliot D."/>
            <person name="Threadgold G."/>
            <person name="Harden G."/>
            <person name="Ware D."/>
            <person name="Begum S."/>
            <person name="Mortimore B."/>
            <person name="Kerry G."/>
            <person name="Heath P."/>
            <person name="Phillimore B."/>
            <person name="Tracey A."/>
            <person name="Corby N."/>
            <person name="Dunn M."/>
            <person name="Johnson C."/>
            <person name="Wood J."/>
            <person name="Clark S."/>
            <person name="Pelan S."/>
            <person name="Griffiths G."/>
            <person name="Smith M."/>
            <person name="Glithero R."/>
            <person name="Howden P."/>
            <person name="Barker N."/>
            <person name="Lloyd C."/>
            <person name="Stevens C."/>
            <person name="Harley J."/>
            <person name="Holt K."/>
            <person name="Panagiotidis G."/>
            <person name="Lovell J."/>
            <person name="Beasley H."/>
            <person name="Henderson C."/>
            <person name="Gordon D."/>
            <person name="Auger K."/>
            <person name="Wright D."/>
            <person name="Collins J."/>
            <person name="Raisen C."/>
            <person name="Dyer L."/>
            <person name="Leung K."/>
            <person name="Robertson L."/>
            <person name="Ambridge K."/>
            <person name="Leongamornlert D."/>
            <person name="McGuire S."/>
            <person name="Gilderthorp R."/>
            <person name="Griffiths C."/>
            <person name="Manthravadi D."/>
            <person name="Nichol S."/>
            <person name="Barker G."/>
            <person name="Whitehead S."/>
            <person name="Kay M."/>
            <person name="Brown J."/>
            <person name="Murnane C."/>
            <person name="Gray E."/>
            <person name="Humphries M."/>
            <person name="Sycamore N."/>
            <person name="Barker D."/>
            <person name="Saunders D."/>
            <person name="Wallis J."/>
            <person name="Babbage A."/>
            <person name="Hammond S."/>
            <person name="Mashreghi-Mohammadi M."/>
            <person name="Barr L."/>
            <person name="Martin S."/>
            <person name="Wray P."/>
            <person name="Ellington A."/>
            <person name="Matthews N."/>
            <person name="Ellwood M."/>
            <person name="Woodmansey R."/>
            <person name="Clark G."/>
            <person name="Cooper J."/>
            <person name="Tromans A."/>
            <person name="Grafham D."/>
            <person name="Skuce C."/>
            <person name="Pandian R."/>
            <person name="Andrews R."/>
            <person name="Harrison E."/>
            <person name="Kimberley A."/>
            <person name="Garnett J."/>
            <person name="Fosker N."/>
            <person name="Hall R."/>
            <person name="Garner P."/>
            <person name="Kelly D."/>
            <person name="Bird C."/>
            <person name="Palmer S."/>
            <person name="Gehring I."/>
            <person name="Berger A."/>
            <person name="Dooley C.M."/>
            <person name="Ersan-Urun Z."/>
            <person name="Eser C."/>
            <person name="Geiger H."/>
            <person name="Geisler M."/>
            <person name="Karotki L."/>
            <person name="Kirn A."/>
            <person name="Konantz J."/>
            <person name="Konantz M."/>
            <person name="Oberlander M."/>
            <person name="Rudolph-Geiger S."/>
            <person name="Teucke M."/>
            <person name="Lanz C."/>
            <person name="Raddatz G."/>
            <person name="Osoegawa K."/>
            <person name="Zhu B."/>
            <person name="Rapp A."/>
            <person name="Widaa S."/>
            <person name="Langford C."/>
            <person name="Yang F."/>
            <person name="Schuster S.C."/>
            <person name="Carter N.P."/>
            <person name="Harrow J."/>
            <person name="Ning Z."/>
            <person name="Herrero J."/>
            <person name="Searle S.M."/>
            <person name="Enright A."/>
            <person name="Geisler R."/>
            <person name="Plasterk R.H."/>
            <person name="Lee C."/>
            <person name="Westerfield M."/>
            <person name="de Jong P.J."/>
            <person name="Zon L.I."/>
            <person name="Postlethwait J.H."/>
            <person name="Nusslein-Volhard C."/>
            <person name="Hubbard T.J."/>
            <person name="Roest Crollius H."/>
            <person name="Rogers J."/>
            <person name="Stemple D.L."/>
        </authorList>
    </citation>
    <scope>NUCLEOTIDE SEQUENCE [LARGE SCALE GENOMIC DNA]</scope>
    <source>
        <strain>Tuebingen</strain>
    </source>
</reference>
<reference evidence="12" key="3">
    <citation type="submission" date="2005-06" db="EMBL/GenBank/DDBJ databases">
        <authorList>
            <consortium name="NIH - Zebrafish Gene Collection (ZGC) project"/>
        </authorList>
    </citation>
    <scope>NUCLEOTIDE SEQUENCE [LARGE SCALE MRNA]</scope>
    <source>
        <tissue evidence="12">Embryo</tissue>
    </source>
</reference>
<reference evidence="11" key="4">
    <citation type="journal article" date="2007" name="Dev. Biol.">
        <title>nanos1 is required to maintain oocyte production in adult zebrafish.</title>
        <authorList>
            <person name="Draper B.W."/>
            <person name="McCallum C.M."/>
            <person name="Moens C.B."/>
        </authorList>
    </citation>
    <scope>FUNCTION</scope>
    <scope>TISSUE SPECIFICITY</scope>
    <scope>DEVELOPMENTAL STAGE</scope>
</reference>
<reference evidence="11" key="5">
    <citation type="journal article" date="2010" name="Biochimie">
        <title>Zebrafish Nanos interacts with and regulates the phosphorylation of Mylz2.</title>
        <authorList>
            <person name="Xu Y."/>
            <person name="Wang H."/>
            <person name="Zhou J."/>
            <person name="Lei Y."/>
            <person name="Zhou Y."/>
            <person name="Yang Q."/>
            <person name="Ye D."/>
            <person name="Li W."/>
            <person name="Deng F."/>
        </authorList>
    </citation>
    <scope>FUNCTION</scope>
    <scope>INTERACTION WITH MYLPFA</scope>
    <scope>MUTAGENESIS OF LYS-156; SER-157; THR-158 AND TRP-159</scope>
</reference>
<reference evidence="11" key="6">
    <citation type="journal article" date="2013" name="Dev. Biol.">
        <title>nanos3 maintains germline stem cells and expression of the conserved germline stem cell gene nanos2 in the zebrafish ovary.</title>
        <authorList>
            <person name="Beer R.L."/>
            <person name="Draper B.W."/>
        </authorList>
    </citation>
    <scope>FUNCTION</scope>
</reference>
<reference evidence="15" key="7">
    <citation type="journal article" date="2010" name="EMBO Rep.">
        <title>Crystal structure of zinc-finger domain of Nanos and its functional implications.</title>
        <authorList>
            <person name="Hashimoto H."/>
            <person name="Hara K."/>
            <person name="Hishiki A."/>
            <person name="Kawaguchi S."/>
            <person name="Shichijo N."/>
            <person name="Nakamura K."/>
            <person name="Unzai S."/>
            <person name="Tamaru Y."/>
            <person name="Shimizu T."/>
            <person name="Sato M."/>
        </authorList>
    </citation>
    <scope>X-RAY CRYSTALLOGRAPHY (2.10 ANGSTROMS) OF 59-159 IN COMPLEX WITH ZN(2+)</scope>
    <scope>FUNCTION</scope>
    <scope>MUTAGENESIS OF LYS-96; HIS-97; LYS-111; ARG-113; ARG-123; TYR-125; LYS-126; LYS-136; LYS-140; ARG-141 AND PHE-142</scope>
</reference>
<organism evidence="13">
    <name type="scientific">Danio rerio</name>
    <name type="common">Zebrafish</name>
    <name type="synonym">Brachydanio rerio</name>
    <dbReference type="NCBI Taxonomy" id="7955"/>
    <lineage>
        <taxon>Eukaryota</taxon>
        <taxon>Metazoa</taxon>
        <taxon>Chordata</taxon>
        <taxon>Craniata</taxon>
        <taxon>Vertebrata</taxon>
        <taxon>Euteleostomi</taxon>
        <taxon>Actinopterygii</taxon>
        <taxon>Neopterygii</taxon>
        <taxon>Teleostei</taxon>
        <taxon>Ostariophysi</taxon>
        <taxon>Cypriniformes</taxon>
        <taxon>Danionidae</taxon>
        <taxon>Danioninae</taxon>
        <taxon>Danio</taxon>
    </lineage>
</organism>
<proteinExistence type="evidence at protein level"/>
<gene>
    <name evidence="14" type="primary">nanos3</name>
    <name evidence="9 10" type="synonym">nanos1</name>
    <name evidence="9 10" type="synonym">nos1</name>
</gene>
<evidence type="ECO:0000250" key="1">
    <source>
        <dbReference type="UniProtKB" id="P60323"/>
    </source>
</evidence>
<evidence type="ECO:0000255" key="2">
    <source>
        <dbReference type="PROSITE-ProRule" id="PRU00855"/>
    </source>
</evidence>
<evidence type="ECO:0000256" key="3">
    <source>
        <dbReference type="SAM" id="MobiDB-lite"/>
    </source>
</evidence>
<evidence type="ECO:0000269" key="4">
    <source>
    </source>
</evidence>
<evidence type="ECO:0000269" key="5">
    <source>
    </source>
</evidence>
<evidence type="ECO:0000269" key="6">
    <source>
    </source>
</evidence>
<evidence type="ECO:0000269" key="7">
    <source>
    </source>
</evidence>
<evidence type="ECO:0000269" key="8">
    <source>
    </source>
</evidence>
<evidence type="ECO:0000303" key="9">
    <source>
    </source>
</evidence>
<evidence type="ECO:0000303" key="10">
    <source>
    </source>
</evidence>
<evidence type="ECO:0000305" key="11"/>
<evidence type="ECO:0000312" key="12">
    <source>
        <dbReference type="EMBL" id="AAH97090.1"/>
    </source>
</evidence>
<evidence type="ECO:0000312" key="13">
    <source>
        <dbReference type="EMBL" id="AAL15474.1"/>
    </source>
</evidence>
<evidence type="ECO:0000312" key="14">
    <source>
        <dbReference type="ZFIN" id="ZDB-GENE-011221-1"/>
    </source>
</evidence>
<evidence type="ECO:0007744" key="15">
    <source>
        <dbReference type="PDB" id="3ALR"/>
    </source>
</evidence>
<evidence type="ECO:0007829" key="16">
    <source>
        <dbReference type="PDB" id="3ALR"/>
    </source>
</evidence>
<comment type="function">
    <text evidence="1 4 5 6 7 8">RNA-binding protein which binds to RNA with no sequence specificity (PubMed:20948543). Probably represses translation of specific mRNAs (By similarity). Essential for the development of primordial germ cells (PGCs) by ensuring their proper migration and survival but is not required for PGC specification (PubMed:11691838, PubMed:17418113). Also required to maintain oocyte production in the adult ovary (PubMed:17418113, PubMed:23228893). Negatively regulates phosphorylation of myosin mylpfa/mylz2 (PubMed:20673786).</text>
</comment>
<comment type="subunit">
    <text evidence="6">Interacts (via C-terminus) with myosin mylpfa/mylz2; the interaction negatively regulates mylpfa phosphorylation.</text>
</comment>
<comment type="interaction">
    <interactant intactId="EBI-8448924">
        <id>Q90WW1</id>
    </interactant>
    <interactant intactId="EBI-8448924">
        <id>Q90WW1</id>
        <label>nanos3</label>
    </interactant>
    <organismsDiffer>false</organismsDiffer>
    <experiments>2</experiments>
</comment>
<comment type="subcellular location">
    <subcellularLocation>
        <location evidence="4">Cytoplasm</location>
    </subcellularLocation>
    <subcellularLocation>
        <location evidence="4">Cytoplasm</location>
        <location evidence="4">Perinuclear region</location>
    </subcellularLocation>
</comment>
<comment type="tissue specificity">
    <text evidence="4 5">In the embryo, displays early ubiquitous expression before being restricted to primordial germ cells in a 3'-UTR-dependent manner (PubMed:11691838). Expressed in early stage germ cells in larval and adult ovaries (PubMed:17418113).</text>
</comment>
<comment type="developmental stage">
    <text evidence="4 5">Present in oocytes and in embryos at the 4- and 256-cell stages before the mid-blastula transition (PubMed:11691838). Levels decline and are barely detectable by the fifth day of development (PubMed:11691838). At 21 and 35 days post-fertilization, expression is restricted to perinuclear stage oocytes (PubMed:17418113). Expressed throughout most stages of oocyte development with the highest levels restricted to stage Ib oocytes (PubMed:17418113).</text>
</comment>
<comment type="domain">
    <text evidence="2">The Nanos-type zinc finger is composed of two C2HC motifs, each motif binding one molecule of zinc. It is essential for the translation repression activity of the protein.</text>
</comment>
<comment type="disruption phenotype">
    <text evidence="4">Morpholino knockdown results in severe defects in primordial germ cell development, leading to a reduced number of cells and to migration defects, while development of the soma remains largely unaffected.</text>
</comment>
<comment type="similarity">
    <text evidence="2">Belongs to the nanos family.</text>
</comment>